<dbReference type="EC" id="4.1.1.50" evidence="1"/>
<dbReference type="EMBL" id="CP000726">
    <property type="protein sequence ID" value="ABS33427.1"/>
    <property type="molecule type" value="Genomic_DNA"/>
</dbReference>
<dbReference type="SMR" id="A7FYV9"/>
<dbReference type="KEGG" id="cba:CLB_3421"/>
<dbReference type="HOGENOM" id="CLU_125470_2_3_9"/>
<dbReference type="UniPathway" id="UPA00331">
    <property type="reaction ID" value="UER00451"/>
</dbReference>
<dbReference type="GO" id="GO:0005829">
    <property type="term" value="C:cytosol"/>
    <property type="evidence" value="ECO:0007669"/>
    <property type="project" value="TreeGrafter"/>
</dbReference>
<dbReference type="GO" id="GO:0004014">
    <property type="term" value="F:adenosylmethionine decarboxylase activity"/>
    <property type="evidence" value="ECO:0007669"/>
    <property type="project" value="UniProtKB-UniRule"/>
</dbReference>
<dbReference type="GO" id="GO:0008295">
    <property type="term" value="P:spermidine biosynthetic process"/>
    <property type="evidence" value="ECO:0007669"/>
    <property type="project" value="UniProtKB-UniRule"/>
</dbReference>
<dbReference type="FunFam" id="3.60.90.10:FF:000012">
    <property type="entry name" value="S-adenosylmethionine decarboxylase proenzyme"/>
    <property type="match status" value="1"/>
</dbReference>
<dbReference type="Gene3D" id="3.60.90.10">
    <property type="entry name" value="S-adenosylmethionine decarboxylase"/>
    <property type="match status" value="1"/>
</dbReference>
<dbReference type="HAMAP" id="MF_00464">
    <property type="entry name" value="AdoMetDC_1"/>
    <property type="match status" value="1"/>
</dbReference>
<dbReference type="InterPro" id="IPR003826">
    <property type="entry name" value="AdoMetDC_fam_prok"/>
</dbReference>
<dbReference type="InterPro" id="IPR016067">
    <property type="entry name" value="S-AdoMet_deCO2ase_core"/>
</dbReference>
<dbReference type="InterPro" id="IPR017716">
    <property type="entry name" value="S-AdoMet_deCOase_pro-enz"/>
</dbReference>
<dbReference type="NCBIfam" id="TIGR03330">
    <property type="entry name" value="SAM_DCase_Bsu"/>
    <property type="match status" value="1"/>
</dbReference>
<dbReference type="PANTHER" id="PTHR33866">
    <property type="entry name" value="S-ADENOSYLMETHIONINE DECARBOXYLASE PROENZYME"/>
    <property type="match status" value="1"/>
</dbReference>
<dbReference type="PANTHER" id="PTHR33866:SF2">
    <property type="entry name" value="S-ADENOSYLMETHIONINE DECARBOXYLASE PROENZYME"/>
    <property type="match status" value="1"/>
</dbReference>
<dbReference type="Pfam" id="PF02675">
    <property type="entry name" value="AdoMet_dc"/>
    <property type="match status" value="1"/>
</dbReference>
<dbReference type="SUPFAM" id="SSF56276">
    <property type="entry name" value="S-adenosylmethionine decarboxylase"/>
    <property type="match status" value="1"/>
</dbReference>
<evidence type="ECO:0000255" key="1">
    <source>
        <dbReference type="HAMAP-Rule" id="MF_00464"/>
    </source>
</evidence>
<name>SPEH_CLOB1</name>
<proteinExistence type="inferred from homology"/>
<keyword id="KW-0068">Autocatalytic cleavage</keyword>
<keyword id="KW-0210">Decarboxylase</keyword>
<keyword id="KW-0456">Lyase</keyword>
<keyword id="KW-0620">Polyamine biosynthesis</keyword>
<keyword id="KW-0670">Pyruvate</keyword>
<keyword id="KW-0949">S-adenosyl-L-methionine</keyword>
<keyword id="KW-0704">Schiff base</keyword>
<keyword id="KW-0745">Spermidine biosynthesis</keyword>
<keyword id="KW-0865">Zymogen</keyword>
<feature type="chain" id="PRO_1000193175" description="S-adenosylmethionine decarboxylase beta chain" evidence="1">
    <location>
        <begin position="1"/>
        <end position="62"/>
    </location>
</feature>
<feature type="chain" id="PRO_1000193176" description="S-adenosylmethionine decarboxylase alpha chain" evidence="1">
    <location>
        <begin position="63"/>
        <end position="116"/>
    </location>
</feature>
<feature type="active site" description="Schiff-base intermediate with substrate; via pyruvic acid" evidence="1">
    <location>
        <position position="63"/>
    </location>
</feature>
<feature type="active site" description="Proton acceptor; for processing activity" evidence="1">
    <location>
        <position position="68"/>
    </location>
</feature>
<feature type="active site" description="Proton donor; for catalytic activity" evidence="1">
    <location>
        <position position="83"/>
    </location>
</feature>
<feature type="site" description="Cleavage (non-hydrolytic); by autolysis" evidence="1">
    <location>
        <begin position="62"/>
        <end position="63"/>
    </location>
</feature>
<feature type="modified residue" description="Pyruvic acid (Ser); by autocatalysis" evidence="1">
    <location>
        <position position="63"/>
    </location>
</feature>
<reference key="1">
    <citation type="journal article" date="2007" name="PLoS ONE">
        <title>Analysis of the neurotoxin complex genes in Clostridium botulinum A1-A4 and B1 strains: BoNT/A3, /Ba4 and /B1 clusters are located within plasmids.</title>
        <authorList>
            <person name="Smith T.J."/>
            <person name="Hill K.K."/>
            <person name="Foley B.T."/>
            <person name="Detter J.C."/>
            <person name="Munk A.C."/>
            <person name="Bruce D.C."/>
            <person name="Doggett N.A."/>
            <person name="Smith L.A."/>
            <person name="Marks J.D."/>
            <person name="Xie G."/>
            <person name="Brettin T.S."/>
        </authorList>
    </citation>
    <scope>NUCLEOTIDE SEQUENCE [LARGE SCALE GENOMIC DNA]</scope>
    <source>
        <strain>ATCC 19397 / Type A</strain>
    </source>
</reference>
<accession>A7FYV9</accession>
<protein>
    <recommendedName>
        <fullName evidence="1">S-adenosylmethionine decarboxylase proenzyme</fullName>
        <shortName evidence="1">AdoMetDC</shortName>
        <shortName evidence="1">SAMDC</shortName>
        <ecNumber evidence="1">4.1.1.50</ecNumber>
    </recommendedName>
    <component>
        <recommendedName>
            <fullName evidence="1">S-adenosylmethionine decarboxylase beta chain</fullName>
        </recommendedName>
    </component>
    <component>
        <recommendedName>
            <fullName evidence="1">S-adenosylmethionine decarboxylase alpha chain</fullName>
        </recommendedName>
    </component>
</protein>
<sequence length="116" mass="13438">MKYSGYHLVIDLFGCNFDQLENTEYIIEMLKKLARALDTKIVAKAFHKFHPQGFSGALIISESHITIHTWPEDAYIGIDIFTCSKCFDPRKIVAYLKENLIFKKVEIKEILRGKID</sequence>
<organism>
    <name type="scientific">Clostridium botulinum (strain ATCC 19397 / Type A)</name>
    <dbReference type="NCBI Taxonomy" id="441770"/>
    <lineage>
        <taxon>Bacteria</taxon>
        <taxon>Bacillati</taxon>
        <taxon>Bacillota</taxon>
        <taxon>Clostridia</taxon>
        <taxon>Eubacteriales</taxon>
        <taxon>Clostridiaceae</taxon>
        <taxon>Clostridium</taxon>
    </lineage>
</organism>
<comment type="function">
    <text evidence="1">Catalyzes the decarboxylation of S-adenosylmethionine to S-adenosylmethioninamine (dcAdoMet), the propylamine donor required for the synthesis of the polyamines spermine and spermidine from the diamine putrescine.</text>
</comment>
<comment type="catalytic activity">
    <reaction evidence="1">
        <text>S-adenosyl-L-methionine + H(+) = S-adenosyl 3-(methylsulfanyl)propylamine + CO2</text>
        <dbReference type="Rhea" id="RHEA:15981"/>
        <dbReference type="ChEBI" id="CHEBI:15378"/>
        <dbReference type="ChEBI" id="CHEBI:16526"/>
        <dbReference type="ChEBI" id="CHEBI:57443"/>
        <dbReference type="ChEBI" id="CHEBI:59789"/>
        <dbReference type="EC" id="4.1.1.50"/>
    </reaction>
</comment>
<comment type="cofactor">
    <cofactor evidence="1">
        <name>pyruvate</name>
        <dbReference type="ChEBI" id="CHEBI:15361"/>
    </cofactor>
    <text evidence="1">Binds 1 pyruvoyl group covalently per subunit.</text>
</comment>
<comment type="pathway">
    <text evidence="1">Amine and polyamine biosynthesis; S-adenosylmethioninamine biosynthesis; S-adenosylmethioninamine from S-adenosyl-L-methionine: step 1/1.</text>
</comment>
<comment type="subunit">
    <text evidence="1">Heterotetramer of two alpha and two beta chains arranged as a dimer of alpha/beta heterodimers.</text>
</comment>
<comment type="PTM">
    <text evidence="1">Is synthesized initially as an inactive proenzyme. Formation of the active enzyme involves a self-maturation process in which the active site pyruvoyl group is generated from an internal serine residue via an autocatalytic post-translational modification. Two non-identical subunits are generated from the proenzyme in this reaction, and the pyruvate is formed at the N-terminus of the alpha chain, which is derived from the carboxyl end of the proenzyme. The post-translation cleavage follows an unusual pathway, termed non-hydrolytic serinolysis, in which the side chain hydroxyl group of the serine supplies its oxygen atom to form the C-terminus of the beta chain, while the remainder of the serine residue undergoes an oxidative deamination to produce ammonia and the pyruvoyl group blocking the N-terminus of the alpha chain.</text>
</comment>
<comment type="similarity">
    <text evidence="1">Belongs to the prokaryotic AdoMetDC family. Type 1 subfamily.</text>
</comment>
<gene>
    <name evidence="1" type="primary">speH</name>
    <name type="ordered locus">CLB_3421</name>
</gene>